<dbReference type="EC" id="2.4.1.21" evidence="1"/>
<dbReference type="EMBL" id="AM884176">
    <property type="protein sequence ID" value="CAP03612.1"/>
    <property type="molecule type" value="Genomic_DNA"/>
</dbReference>
<dbReference type="RefSeq" id="WP_009873413.1">
    <property type="nucleotide sequence ID" value="NC_010287.1"/>
</dbReference>
<dbReference type="RefSeq" id="YP_001654258.1">
    <property type="nucleotide sequence ID" value="NC_010287.1"/>
</dbReference>
<dbReference type="SMR" id="B0B925"/>
<dbReference type="CAZy" id="GT5">
    <property type="family name" value="Glycosyltransferase Family 5"/>
</dbReference>
<dbReference type="KEGG" id="ctb:CTL0167"/>
<dbReference type="PATRIC" id="fig|471472.4.peg.180"/>
<dbReference type="HOGENOM" id="CLU_009583_18_3_0"/>
<dbReference type="UniPathway" id="UPA00164"/>
<dbReference type="Proteomes" id="UP001154402">
    <property type="component" value="Chromosome"/>
</dbReference>
<dbReference type="GO" id="GO:0009011">
    <property type="term" value="F:alpha-1,4-glucan glucosyltransferase (ADP-glucose donor) activity"/>
    <property type="evidence" value="ECO:0007669"/>
    <property type="project" value="UniProtKB-UniRule"/>
</dbReference>
<dbReference type="GO" id="GO:0004373">
    <property type="term" value="F:alpha-1,4-glucan glucosyltransferase (UDP-glucose donor) activity"/>
    <property type="evidence" value="ECO:0007669"/>
    <property type="project" value="InterPro"/>
</dbReference>
<dbReference type="GO" id="GO:0005978">
    <property type="term" value="P:glycogen biosynthetic process"/>
    <property type="evidence" value="ECO:0007669"/>
    <property type="project" value="UniProtKB-UniRule"/>
</dbReference>
<dbReference type="CDD" id="cd03791">
    <property type="entry name" value="GT5_Glycogen_synthase_DULL1-like"/>
    <property type="match status" value="1"/>
</dbReference>
<dbReference type="Gene3D" id="3.40.50.2000">
    <property type="entry name" value="Glycogen Phosphorylase B"/>
    <property type="match status" value="2"/>
</dbReference>
<dbReference type="HAMAP" id="MF_00484">
    <property type="entry name" value="Glycogen_synth"/>
    <property type="match status" value="1"/>
</dbReference>
<dbReference type="InterPro" id="IPR001296">
    <property type="entry name" value="Glyco_trans_1"/>
</dbReference>
<dbReference type="InterPro" id="IPR011835">
    <property type="entry name" value="GS/SS"/>
</dbReference>
<dbReference type="InterPro" id="IPR013534">
    <property type="entry name" value="Starch_synth_cat_dom"/>
</dbReference>
<dbReference type="NCBIfam" id="TIGR02095">
    <property type="entry name" value="glgA"/>
    <property type="match status" value="1"/>
</dbReference>
<dbReference type="NCBIfam" id="NF001904">
    <property type="entry name" value="PRK00654.2-3"/>
    <property type="match status" value="1"/>
</dbReference>
<dbReference type="PANTHER" id="PTHR46083">
    <property type="match status" value="1"/>
</dbReference>
<dbReference type="PANTHER" id="PTHR46083:SF1">
    <property type="entry name" value="GLYCOGEN SYNTHASE 2-RELATED"/>
    <property type="match status" value="1"/>
</dbReference>
<dbReference type="Pfam" id="PF08323">
    <property type="entry name" value="Glyco_transf_5"/>
    <property type="match status" value="1"/>
</dbReference>
<dbReference type="Pfam" id="PF00534">
    <property type="entry name" value="Glycos_transf_1"/>
    <property type="match status" value="1"/>
</dbReference>
<dbReference type="SUPFAM" id="SSF53756">
    <property type="entry name" value="UDP-Glycosyltransferase/glycogen phosphorylase"/>
    <property type="match status" value="1"/>
</dbReference>
<reference key="1">
    <citation type="journal article" date="2008" name="Genome Res.">
        <title>Chlamydia trachomatis: genome sequence analysis of lymphogranuloma venereum isolates.</title>
        <authorList>
            <person name="Thomson N.R."/>
            <person name="Holden M.T.G."/>
            <person name="Carder C."/>
            <person name="Lennard N."/>
            <person name="Lockey S.J."/>
            <person name="Marsh P."/>
            <person name="Skipp P."/>
            <person name="O'Connor C.D."/>
            <person name="Goodhead I."/>
            <person name="Norbertzcak H."/>
            <person name="Harris B."/>
            <person name="Ormond D."/>
            <person name="Rance R."/>
            <person name="Quail M.A."/>
            <person name="Parkhill J."/>
            <person name="Stephens R.S."/>
            <person name="Clarke I.N."/>
        </authorList>
    </citation>
    <scope>NUCLEOTIDE SEQUENCE [LARGE SCALE GENOMIC DNA]</scope>
    <source>
        <strain>ATCC VR-902B / DSM 19102 / 434/Bu</strain>
    </source>
</reference>
<keyword id="KW-0320">Glycogen biosynthesis</keyword>
<keyword id="KW-0328">Glycosyltransferase</keyword>
<keyword id="KW-0808">Transferase</keyword>
<gene>
    <name evidence="1" type="primary">glgA</name>
    <name type="ordered locus">CTL0167</name>
</gene>
<sequence>MKIIHTAIEFAPVIKAGGLGDALYGLAKALAANHTTEVVIPLYPKLFTLPKEQDLCSIQKLSYFFAGEQEATAFSYFYEGIKVTLFKLDTQPELFENAETIYTSDDAFRFCAFSAAAASYIQKEGANIVHLHDWHTGLVAGLLKQQPCSQLQKIVLTLHNFGYRGYTTREILEASSLNEFYISQYQLFRDPQTCVLLKGALYCSDFVTTVSPTYAKEILEDYSDYEIHDAITARQHHLRGILNGIDTTIWGPETDPNLAKNYTKELFETPSIFFEAKAENKKALYERLGLSLEHSPCVCIISRIAEQKGPHFMKQAILHALENAYTLIIIGTCYGNQLHEEFANLQESLANSPNVRILLTYSDVLARQIFAAADMICIPSMFEPCGLTQMIGMRYGTVPLVRATGGLADTVANGINGFSFFNPHDFYEFRNMLLEAVTTYRTNHDKWQHIVRACLNFSSDLETAANKYLEIYKQ</sequence>
<comment type="function">
    <text evidence="1">Synthesizes alpha-1,4-glucan chains using ADP-glucose.</text>
</comment>
<comment type="catalytic activity">
    <reaction evidence="1">
        <text>[(1-&gt;4)-alpha-D-glucosyl](n) + ADP-alpha-D-glucose = [(1-&gt;4)-alpha-D-glucosyl](n+1) + ADP + H(+)</text>
        <dbReference type="Rhea" id="RHEA:18189"/>
        <dbReference type="Rhea" id="RHEA-COMP:9584"/>
        <dbReference type="Rhea" id="RHEA-COMP:9587"/>
        <dbReference type="ChEBI" id="CHEBI:15378"/>
        <dbReference type="ChEBI" id="CHEBI:15444"/>
        <dbReference type="ChEBI" id="CHEBI:57498"/>
        <dbReference type="ChEBI" id="CHEBI:456216"/>
        <dbReference type="EC" id="2.4.1.21"/>
    </reaction>
</comment>
<comment type="pathway">
    <text evidence="1">Glycan biosynthesis; glycogen biosynthesis.</text>
</comment>
<comment type="similarity">
    <text evidence="1">Belongs to the glycosyltransferase 1 family. Bacterial/plant glycogen synthase subfamily.</text>
</comment>
<evidence type="ECO:0000255" key="1">
    <source>
        <dbReference type="HAMAP-Rule" id="MF_00484"/>
    </source>
</evidence>
<proteinExistence type="inferred from homology"/>
<name>GLGA_CHLT2</name>
<organism>
    <name type="scientific">Chlamydia trachomatis serovar L2 (strain ATCC VR-902B / DSM 19102 / 434/Bu)</name>
    <dbReference type="NCBI Taxonomy" id="471472"/>
    <lineage>
        <taxon>Bacteria</taxon>
        <taxon>Pseudomonadati</taxon>
        <taxon>Chlamydiota</taxon>
        <taxon>Chlamydiia</taxon>
        <taxon>Chlamydiales</taxon>
        <taxon>Chlamydiaceae</taxon>
        <taxon>Chlamydia/Chlamydophila group</taxon>
        <taxon>Chlamydia</taxon>
    </lineage>
</organism>
<accession>B0B925</accession>
<protein>
    <recommendedName>
        <fullName evidence="1">Glycogen synthase</fullName>
        <ecNumber evidence="1">2.4.1.21</ecNumber>
    </recommendedName>
    <alternativeName>
        <fullName evidence="1">Starch [bacterial glycogen] synthase</fullName>
    </alternativeName>
</protein>
<feature type="chain" id="PRO_1000126059" description="Glycogen synthase">
    <location>
        <begin position="1"/>
        <end position="474"/>
    </location>
</feature>
<feature type="binding site" evidence="1">
    <location>
        <position position="15"/>
    </location>
    <ligand>
        <name>ADP-alpha-D-glucose</name>
        <dbReference type="ChEBI" id="CHEBI:57498"/>
    </ligand>
</feature>